<proteinExistence type="evidence at protein level"/>
<comment type="function">
    <text evidence="8">Essential for the beta oxidation of unsaturated fatty acids.</text>
</comment>
<comment type="catalytic activity">
    <reaction>
        <text>a (3Z)-enoyl-CoA = a 4-saturated (2E)-enoyl-CoA</text>
        <dbReference type="Rhea" id="RHEA:45900"/>
        <dbReference type="ChEBI" id="CHEBI:85097"/>
        <dbReference type="ChEBI" id="CHEBI:85489"/>
        <dbReference type="EC" id="5.3.3.8"/>
    </reaction>
</comment>
<comment type="catalytic activity">
    <reaction>
        <text>a (3E)-enoyl-CoA = a 4-saturated (2E)-enoyl-CoA</text>
        <dbReference type="Rhea" id="RHEA:45228"/>
        <dbReference type="ChEBI" id="CHEBI:58521"/>
        <dbReference type="ChEBI" id="CHEBI:85097"/>
        <dbReference type="EC" id="5.3.3.8"/>
    </reaction>
</comment>
<comment type="pathway">
    <text>Lipid metabolism; fatty acid beta-oxidation.</text>
</comment>
<comment type="subunit">
    <text evidence="2 3 5 6">Homohexamer, dimer of trimers. Interacts with DCI1.</text>
</comment>
<comment type="subcellular location">
    <subcellularLocation>
        <location evidence="2 4 8">Peroxisome</location>
    </subcellularLocation>
    <text>This location is DCI1 dependent.</text>
</comment>
<comment type="induction">
    <text evidence="8">By oleate.</text>
</comment>
<comment type="similarity">
    <text evidence="9">Belongs to the enoyl-CoA hydratase/isomerase family.</text>
</comment>
<reference key="1">
    <citation type="journal article" date="1998" name="J. Biol. Chem.">
        <title>Molecular characterization of Saccharomyces cerevisiae Delta3, Delta2-enoyl-CoA isomerase.</title>
        <authorList>
            <person name="Geisbrecht B.V."/>
            <person name="Zhu D."/>
            <person name="Schulz K."/>
            <person name="Nau K."/>
            <person name="Morrell J.C."/>
            <person name="Geraghty M.T."/>
            <person name="Schulz H."/>
            <person name="Erdmann R."/>
            <person name="Gould S.J."/>
        </authorList>
    </citation>
    <scope>NUCLEOTIDE SEQUENCE [GENOMIC DNA]</scope>
    <scope>FUNCTION</scope>
    <scope>SUBCELLULAR LOCATION</scope>
    <scope>INDUCTION</scope>
</reference>
<reference key="2">
    <citation type="journal article" date="1997" name="Nature">
        <title>The nucleotide sequence of Saccharomyces cerevisiae chromosome XII.</title>
        <authorList>
            <person name="Johnston M."/>
            <person name="Hillier L.W."/>
            <person name="Riles L."/>
            <person name="Albermann K."/>
            <person name="Andre B."/>
            <person name="Ansorge W."/>
            <person name="Benes V."/>
            <person name="Brueckner M."/>
            <person name="Delius H."/>
            <person name="Dubois E."/>
            <person name="Duesterhoeft A."/>
            <person name="Entian K.-D."/>
            <person name="Floeth M."/>
            <person name="Goffeau A."/>
            <person name="Hebling U."/>
            <person name="Heumann K."/>
            <person name="Heuss-Neitzel D."/>
            <person name="Hilbert H."/>
            <person name="Hilger F."/>
            <person name="Kleine K."/>
            <person name="Koetter P."/>
            <person name="Louis E.J."/>
            <person name="Messenguy F."/>
            <person name="Mewes H.-W."/>
            <person name="Miosga T."/>
            <person name="Moestl D."/>
            <person name="Mueller-Auer S."/>
            <person name="Nentwich U."/>
            <person name="Obermaier B."/>
            <person name="Piravandi E."/>
            <person name="Pohl T.M."/>
            <person name="Portetelle D."/>
            <person name="Purnelle B."/>
            <person name="Rechmann S."/>
            <person name="Rieger M."/>
            <person name="Rinke M."/>
            <person name="Rose M."/>
            <person name="Scharfe M."/>
            <person name="Scherens B."/>
            <person name="Scholler P."/>
            <person name="Schwager C."/>
            <person name="Schwarz S."/>
            <person name="Underwood A.P."/>
            <person name="Urrestarazu L.A."/>
            <person name="Vandenbol M."/>
            <person name="Verhasselt P."/>
            <person name="Vierendeels F."/>
            <person name="Voet M."/>
            <person name="Volckaert G."/>
            <person name="Voss H."/>
            <person name="Wambutt R."/>
            <person name="Wedler E."/>
            <person name="Wedler H."/>
            <person name="Zimmermann F.K."/>
            <person name="Zollner A."/>
            <person name="Hani J."/>
            <person name="Hoheisel J.D."/>
        </authorList>
    </citation>
    <scope>NUCLEOTIDE SEQUENCE [LARGE SCALE GENOMIC DNA]</scope>
    <source>
        <strain>ATCC 204508 / S288c</strain>
    </source>
</reference>
<reference key="3">
    <citation type="journal article" date="2014" name="G3 (Bethesda)">
        <title>The reference genome sequence of Saccharomyces cerevisiae: Then and now.</title>
        <authorList>
            <person name="Engel S.R."/>
            <person name="Dietrich F.S."/>
            <person name="Fisk D.G."/>
            <person name="Binkley G."/>
            <person name="Balakrishnan R."/>
            <person name="Costanzo M.C."/>
            <person name="Dwight S.S."/>
            <person name="Hitz B.C."/>
            <person name="Karra K."/>
            <person name="Nash R.S."/>
            <person name="Weng S."/>
            <person name="Wong E.D."/>
            <person name="Lloyd P."/>
            <person name="Skrzypek M.S."/>
            <person name="Miyasato S.R."/>
            <person name="Simison M."/>
            <person name="Cherry J.M."/>
        </authorList>
    </citation>
    <scope>GENOME REANNOTATION</scope>
    <source>
        <strain>ATCC 204508 / S288c</strain>
    </source>
</reference>
<reference key="4">
    <citation type="journal article" date="1999" name="Biochem. Biophys. Res. Commun.">
        <title>Preliminary characterization of Yor180Cp: identification of a novel peroxisomal protein of Saccharomyces cerevisiae involved in fatty acid metabolism.</title>
        <authorList>
            <person name="Geisbrecht B.V."/>
            <person name="Schulz K."/>
            <person name="Nau K."/>
            <person name="Geraghty M.T."/>
            <person name="Schulz H."/>
            <person name="Erdmann R."/>
            <person name="Gould S.J."/>
        </authorList>
    </citation>
    <scope>SUBCELLULAR LOCATION</scope>
    <scope>INTERACTION WITH DCI1</scope>
</reference>
<reference key="5">
    <citation type="journal article" date="2000" name="Acta Crystallogr. D">
        <title>Crystallization and X-ray diffraction analysis of peroxisomal Delta3-Delta2-enoyl-CoA isomerase from Saccharomyces cerevisiae.</title>
        <authorList>
            <person name="Mursula A.M."/>
            <person name="van Aalten D.M."/>
            <person name="Modis Y."/>
            <person name="Hiltunen J.K."/>
            <person name="Wierenga R.K."/>
        </authorList>
    </citation>
    <scope>CRYSTALLIZATION</scope>
    <scope>SUBUNIT</scope>
</reference>
<reference key="6">
    <citation type="journal article" date="2001" name="Eur. J. Cell Biol.">
        <title>Eci1p uses a PTS1 to enter peroxisomes: either its own or that of a partner, Dci1p.</title>
        <authorList>
            <person name="Yang X."/>
            <person name="Purdue P.E."/>
            <person name="Lazarow P.B."/>
        </authorList>
    </citation>
    <scope>SUBCELLULAR LOCATION</scope>
    <scope>DOMAIN</scope>
</reference>
<reference key="7">
    <citation type="journal article" date="2001" name="J. Mol. Biol.">
        <title>The crystal structure of delta(3)-delta(2)-enoyl-CoA isomerase.</title>
        <authorList>
            <person name="Mursula A.M."/>
            <person name="van Aalten D.M."/>
            <person name="Hiltunen J.K."/>
            <person name="Wierenga R.K."/>
        </authorList>
    </citation>
    <scope>X-RAY CRYSTALLOGRAPHY (2.15 ANGSTROMS)</scope>
    <scope>MUTAGENESIS OF GLU-158</scope>
    <scope>SUBUNIT</scope>
</reference>
<reference key="8">
    <citation type="journal article" date="2004" name="FEBS Lett.">
        <title>Structural studies on delta(3)-delta(2)-enoyl-CoA isomerase: the variable mode of assembly of the trimeric disks of the crotonase superfamily.</title>
        <authorList>
            <person name="Mursula A.M."/>
            <person name="Hiltunen J.K."/>
            <person name="Wierenga R.K."/>
        </authorList>
    </citation>
    <scope>X-RAY CRYSTALLOGRAPHY (2.1 ANGSTROMS)</scope>
    <scope>SUBUNIT</scope>
</reference>
<reference key="9">
    <citation type="journal article" date="2015" name="Acta Crystallogr. D">
        <title>Structures of yeast peroxisomal (3),(2)-enoyl-CoA isomerase complexed with acyl-CoA substrate analogues: the importance of hydrogen-bond networks for the reactivity of the catalytic base and the oxyanion hole.</title>
        <authorList>
            <person name="Onwukwe G.U."/>
            <person name="Koski M.K."/>
            <person name="Pihko P."/>
            <person name="Schmitz W."/>
            <person name="Wierenga R.K."/>
        </authorList>
    </citation>
    <scope>X-RAY CRYSTALLOGRAPHY (1.81 ANGSTROMS) OF 1-268 IN COMPLEX WITH SUBSTRATE ANALOGS</scope>
    <scope>ACTIVE SITE</scope>
</reference>
<accession>Q05871</accession>
<accession>D6VYS8</accession>
<evidence type="ECO:0000255" key="1"/>
<evidence type="ECO:0000269" key="2">
    <source>
    </source>
</evidence>
<evidence type="ECO:0000269" key="3">
    <source>
    </source>
</evidence>
<evidence type="ECO:0000269" key="4">
    <source>
    </source>
</evidence>
<evidence type="ECO:0000269" key="5">
    <source>
    </source>
</evidence>
<evidence type="ECO:0000269" key="6">
    <source>
    </source>
</evidence>
<evidence type="ECO:0000269" key="7">
    <source>
    </source>
</evidence>
<evidence type="ECO:0000269" key="8">
    <source>
    </source>
</evidence>
<evidence type="ECO:0000305" key="9"/>
<evidence type="ECO:0007744" key="10">
    <source>
        <dbReference type="PDB" id="4ZDB"/>
    </source>
</evidence>
<evidence type="ECO:0007744" key="11">
    <source>
        <dbReference type="PDB" id="4ZDC"/>
    </source>
</evidence>
<evidence type="ECO:0007829" key="12">
    <source>
        <dbReference type="PDB" id="1K39"/>
    </source>
</evidence>
<evidence type="ECO:0007829" key="13">
    <source>
        <dbReference type="PDB" id="4ZDB"/>
    </source>
</evidence>
<evidence type="ECO:0007829" key="14">
    <source>
        <dbReference type="PDB" id="4ZDF"/>
    </source>
</evidence>
<organism>
    <name type="scientific">Saccharomyces cerevisiae (strain ATCC 204508 / S288c)</name>
    <name type="common">Baker's yeast</name>
    <dbReference type="NCBI Taxonomy" id="559292"/>
    <lineage>
        <taxon>Eukaryota</taxon>
        <taxon>Fungi</taxon>
        <taxon>Dikarya</taxon>
        <taxon>Ascomycota</taxon>
        <taxon>Saccharomycotina</taxon>
        <taxon>Saccharomycetes</taxon>
        <taxon>Saccharomycetales</taxon>
        <taxon>Saccharomycetaceae</taxon>
        <taxon>Saccharomyces</taxon>
    </lineage>
</organism>
<name>ECI1_YEAST</name>
<feature type="chain" id="PRO_0000109263" description="3,2-trans-enoyl-CoA isomerase">
    <location>
        <begin position="1"/>
        <end position="280"/>
    </location>
</feature>
<feature type="short sequence motif" description="Microbody targeting signal" evidence="1">
    <location>
        <begin position="278"/>
        <end position="280"/>
    </location>
</feature>
<feature type="active site" description="Proton donor/acceptor" evidence="7">
    <location>
        <position position="158"/>
    </location>
</feature>
<feature type="binding site" evidence="7 10 11">
    <location>
        <begin position="68"/>
        <end position="72"/>
    </location>
    <ligand>
        <name>substrate</name>
    </ligand>
</feature>
<feature type="binding site" evidence="7 11">
    <location>
        <position position="126"/>
    </location>
    <ligand>
        <name>substrate</name>
    </ligand>
</feature>
<feature type="mutagenesis site" description="Loss of activity." evidence="5">
    <original>E</original>
    <variation>A</variation>
    <location>
        <position position="158"/>
    </location>
</feature>
<feature type="strand" evidence="14">
    <location>
        <begin position="11"/>
        <end position="16"/>
    </location>
</feature>
<feature type="strand" evidence="14">
    <location>
        <begin position="19"/>
        <end position="24"/>
    </location>
</feature>
<feature type="helix" evidence="14">
    <location>
        <begin position="27"/>
        <end position="29"/>
    </location>
</feature>
<feature type="helix" evidence="14">
    <location>
        <begin position="35"/>
        <end position="50"/>
    </location>
</feature>
<feature type="strand" evidence="14">
    <location>
        <begin position="56"/>
        <end position="60"/>
    </location>
</feature>
<feature type="strand" evidence="14">
    <location>
        <begin position="65"/>
        <end position="67"/>
    </location>
</feature>
<feature type="helix" evidence="14">
    <location>
        <begin position="73"/>
        <end position="75"/>
    </location>
</feature>
<feature type="turn" evidence="12">
    <location>
        <begin position="77"/>
        <end position="81"/>
    </location>
</feature>
<feature type="strand" evidence="13">
    <location>
        <begin position="82"/>
        <end position="88"/>
    </location>
</feature>
<feature type="helix" evidence="14">
    <location>
        <begin position="89"/>
        <end position="96"/>
    </location>
</feature>
<feature type="helix" evidence="14">
    <location>
        <begin position="98"/>
        <end position="110"/>
    </location>
</feature>
<feature type="strand" evidence="14">
    <location>
        <begin position="113"/>
        <end position="119"/>
    </location>
</feature>
<feature type="helix" evidence="14">
    <location>
        <begin position="125"/>
        <end position="133"/>
    </location>
</feature>
<feature type="strand" evidence="14">
    <location>
        <begin position="134"/>
        <end position="141"/>
    </location>
</feature>
<feature type="strand" evidence="14">
    <location>
        <begin position="145"/>
        <end position="147"/>
    </location>
</feature>
<feature type="helix" evidence="14">
    <location>
        <begin position="150"/>
        <end position="153"/>
    </location>
</feature>
<feature type="helix" evidence="14">
    <location>
        <begin position="161"/>
        <end position="169"/>
    </location>
</feature>
<feature type="helix" evidence="14">
    <location>
        <begin position="171"/>
        <end position="179"/>
    </location>
</feature>
<feature type="helix" evidence="14">
    <location>
        <begin position="186"/>
        <end position="191"/>
    </location>
</feature>
<feature type="strand" evidence="14">
    <location>
        <begin position="196"/>
        <end position="198"/>
    </location>
</feature>
<feature type="helix" evidence="14">
    <location>
        <begin position="206"/>
        <end position="220"/>
    </location>
</feature>
<feature type="turn" evidence="14">
    <location>
        <begin position="221"/>
        <end position="223"/>
    </location>
</feature>
<feature type="helix" evidence="14">
    <location>
        <begin position="226"/>
        <end position="237"/>
    </location>
</feature>
<feature type="turn" evidence="14">
    <location>
        <begin position="238"/>
        <end position="240"/>
    </location>
</feature>
<feature type="helix" evidence="14">
    <location>
        <begin position="241"/>
        <end position="261"/>
    </location>
</feature>
<feature type="turn" evidence="14">
    <location>
        <begin position="263"/>
        <end position="266"/>
    </location>
</feature>
<sequence length="280" mass="31698">MSQEIRQNEKISYRIEGPFFIIHLMNPDNLNALEGEDYIYLGELLELADRNRDVYFTIIQSSGRFFSSGADFKGIAKAQGDDTNKYPSETSKWVSNFVARNVYVTDAFIKHSKVLICCLNGPAIGLSAALVALCDIVYSINDKVYLLYPFANLGLITEGGTTVSLPLKFGTNTTYECLMFNKPFKYDIMCENGFISKNFNMPSSNAEAFNAKVLEELREKVKGLYLPSCLGMKKLLKSNHIDAFNKANSVEVNESLKYWVDGEPLKRFRQLGSKQRKHRL</sequence>
<dbReference type="EC" id="5.3.3.8"/>
<dbReference type="EMBL" id="AF090442">
    <property type="protein sequence ID" value="AAC83700.1"/>
    <property type="molecule type" value="Genomic_DNA"/>
</dbReference>
<dbReference type="EMBL" id="U17243">
    <property type="protein sequence ID" value="AAB67329.1"/>
    <property type="molecule type" value="Genomic_DNA"/>
</dbReference>
<dbReference type="EMBL" id="BK006945">
    <property type="protein sequence ID" value="DAA09594.1"/>
    <property type="molecule type" value="Genomic_DNA"/>
</dbReference>
<dbReference type="PIR" id="S50369">
    <property type="entry name" value="S50369"/>
</dbReference>
<dbReference type="RefSeq" id="NP_013386.1">
    <property type="nucleotide sequence ID" value="NM_001182171.1"/>
</dbReference>
<dbReference type="PDB" id="1HNO">
    <property type="method" value="X-ray"/>
    <property type="resolution" value="2.50 A"/>
    <property type="chains" value="A=1-280"/>
</dbReference>
<dbReference type="PDB" id="1HNU">
    <property type="method" value="X-ray"/>
    <property type="resolution" value="2.15 A"/>
    <property type="chains" value="A=1-280"/>
</dbReference>
<dbReference type="PDB" id="1K39">
    <property type="method" value="X-ray"/>
    <property type="resolution" value="3.29 A"/>
    <property type="chains" value="A/B/C=1-280"/>
</dbReference>
<dbReference type="PDB" id="1PJH">
    <property type="method" value="X-ray"/>
    <property type="resolution" value="2.10 A"/>
    <property type="chains" value="A/B/C=1-280"/>
</dbReference>
<dbReference type="PDB" id="4ZDB">
    <property type="method" value="X-ray"/>
    <property type="resolution" value="2.14 A"/>
    <property type="chains" value="A/B/C=1-280"/>
</dbReference>
<dbReference type="PDB" id="4ZDC">
    <property type="method" value="X-ray"/>
    <property type="resolution" value="2.13 A"/>
    <property type="chains" value="A/B/C=1-280"/>
</dbReference>
<dbReference type="PDB" id="4ZDD">
    <property type="method" value="X-ray"/>
    <property type="resolution" value="3.00 A"/>
    <property type="chains" value="A=1-280"/>
</dbReference>
<dbReference type="PDB" id="4ZDE">
    <property type="method" value="X-ray"/>
    <property type="resolution" value="2.10 A"/>
    <property type="chains" value="A/B/C=1-280"/>
</dbReference>
<dbReference type="PDB" id="4ZDF">
    <property type="method" value="X-ray"/>
    <property type="resolution" value="1.81 A"/>
    <property type="chains" value="A/B=1-268"/>
</dbReference>
<dbReference type="PDBsum" id="1HNO"/>
<dbReference type="PDBsum" id="1HNU"/>
<dbReference type="PDBsum" id="1K39"/>
<dbReference type="PDBsum" id="1PJH"/>
<dbReference type="PDBsum" id="4ZDB"/>
<dbReference type="PDBsum" id="4ZDC"/>
<dbReference type="PDBsum" id="4ZDD"/>
<dbReference type="PDBsum" id="4ZDE"/>
<dbReference type="PDBsum" id="4ZDF"/>
<dbReference type="SMR" id="Q05871"/>
<dbReference type="BioGRID" id="31549">
    <property type="interactions" value="28"/>
</dbReference>
<dbReference type="DIP" id="DIP-1692N"/>
<dbReference type="FunCoup" id="Q05871">
    <property type="interactions" value="261"/>
</dbReference>
<dbReference type="IntAct" id="Q05871">
    <property type="interactions" value="4"/>
</dbReference>
<dbReference type="MINT" id="Q05871"/>
<dbReference type="STRING" id="4932.YLR284C"/>
<dbReference type="PaxDb" id="4932-YLR284C"/>
<dbReference type="PeptideAtlas" id="Q05871"/>
<dbReference type="EnsemblFungi" id="YLR284C_mRNA">
    <property type="protein sequence ID" value="YLR284C"/>
    <property type="gene ID" value="YLR284C"/>
</dbReference>
<dbReference type="GeneID" id="850990"/>
<dbReference type="KEGG" id="sce:YLR284C"/>
<dbReference type="AGR" id="SGD:S000004274"/>
<dbReference type="SGD" id="S000004274">
    <property type="gene designation" value="ECI1"/>
</dbReference>
<dbReference type="VEuPathDB" id="FungiDB:YLR284C"/>
<dbReference type="eggNOG" id="KOG0016">
    <property type="taxonomic scope" value="Eukaryota"/>
</dbReference>
<dbReference type="GeneTree" id="ENSGT00940000173631"/>
<dbReference type="HOGENOM" id="CLU_009834_6_2_1"/>
<dbReference type="InParanoid" id="Q05871"/>
<dbReference type="OMA" id="FQAIMDF"/>
<dbReference type="OrthoDB" id="2018133at2759"/>
<dbReference type="BioCyc" id="MetaCyc:YLR284C-MONOMER"/>
<dbReference type="BioCyc" id="YEAST:YLR284C-MONOMER"/>
<dbReference type="BRENDA" id="5.3.3.8">
    <property type="organism ID" value="984"/>
</dbReference>
<dbReference type="Reactome" id="R-SCE-390247">
    <property type="pathway name" value="Beta-oxidation of very long chain fatty acids"/>
</dbReference>
<dbReference type="Reactome" id="R-SCE-9033241">
    <property type="pathway name" value="Peroxisomal protein import"/>
</dbReference>
<dbReference type="UniPathway" id="UPA00659"/>
<dbReference type="BioGRID-ORCS" id="850990">
    <property type="hits" value="0 hits in 10 CRISPR screens"/>
</dbReference>
<dbReference type="EvolutionaryTrace" id="Q05871"/>
<dbReference type="PRO" id="PR:Q05871"/>
<dbReference type="Proteomes" id="UP000002311">
    <property type="component" value="Chromosome XII"/>
</dbReference>
<dbReference type="RNAct" id="Q05871">
    <property type="molecule type" value="protein"/>
</dbReference>
<dbReference type="GO" id="GO:0005782">
    <property type="term" value="C:peroxisomal matrix"/>
    <property type="evidence" value="ECO:0000318"/>
    <property type="project" value="GO_Central"/>
</dbReference>
<dbReference type="GO" id="GO:0005777">
    <property type="term" value="C:peroxisome"/>
    <property type="evidence" value="ECO:0000314"/>
    <property type="project" value="SGD"/>
</dbReference>
<dbReference type="GO" id="GO:0004165">
    <property type="term" value="F:delta(3)-delta(2)-enoyl-CoA isomerase activity"/>
    <property type="evidence" value="ECO:0000314"/>
    <property type="project" value="SGD"/>
</dbReference>
<dbReference type="GO" id="GO:0006635">
    <property type="term" value="P:fatty acid beta-oxidation"/>
    <property type="evidence" value="ECO:0000314"/>
    <property type="project" value="SGD"/>
</dbReference>
<dbReference type="CDD" id="cd06558">
    <property type="entry name" value="crotonase-like"/>
    <property type="match status" value="1"/>
</dbReference>
<dbReference type="FunFam" id="3.90.226.10:FF:000048">
    <property type="entry name" value="3,2-trans-enoyl-CoA isomerase"/>
    <property type="match status" value="1"/>
</dbReference>
<dbReference type="Gene3D" id="3.90.226.10">
    <property type="entry name" value="2-enoyl-CoA Hydratase, Chain A, domain 1"/>
    <property type="match status" value="1"/>
</dbReference>
<dbReference type="InterPro" id="IPR029045">
    <property type="entry name" value="ClpP/crotonase-like_dom_sf"/>
</dbReference>
<dbReference type="InterPro" id="IPR051053">
    <property type="entry name" value="ECH/Chromodomain_protein"/>
</dbReference>
<dbReference type="InterPro" id="IPR001753">
    <property type="entry name" value="Enoyl-CoA_hydra/iso"/>
</dbReference>
<dbReference type="PANTHER" id="PTHR43684">
    <property type="match status" value="1"/>
</dbReference>
<dbReference type="PANTHER" id="PTHR43684:SF1">
    <property type="entry name" value="ENOYL-COA DELTA ISOMERASE 2"/>
    <property type="match status" value="1"/>
</dbReference>
<dbReference type="Pfam" id="PF00378">
    <property type="entry name" value="ECH_1"/>
    <property type="match status" value="1"/>
</dbReference>
<dbReference type="SUPFAM" id="SSF52096">
    <property type="entry name" value="ClpP/crotonase"/>
    <property type="match status" value="1"/>
</dbReference>
<keyword id="KW-0002">3D-structure</keyword>
<keyword id="KW-0276">Fatty acid metabolism</keyword>
<keyword id="KW-0413">Isomerase</keyword>
<keyword id="KW-0443">Lipid metabolism</keyword>
<keyword id="KW-0576">Peroxisome</keyword>
<keyword id="KW-1185">Reference proteome</keyword>
<gene>
    <name type="primary">ECI1</name>
    <name type="ordered locus">YLR284C</name>
</gene>
<protein>
    <recommendedName>
        <fullName>3,2-trans-enoyl-CoA isomerase</fullName>
        <ecNumber>5.3.3.8</ecNumber>
    </recommendedName>
    <alternativeName>
        <fullName>Delta(3),Delta(2)-enoyl-CoA isomerase</fullName>
        <shortName>D3,D2-enoyl-CoA isomerase</shortName>
    </alternativeName>
    <alternativeName>
        <fullName>Dodecenoyl-CoA isomerase</fullName>
    </alternativeName>
</protein>